<accession>Q6R7B7</accession>
<sequence>MGKIVKERVFCKAGTQGVNITTNFKHKLQSLYKKNVKKAIDMEIVEASKRIKLMFLPTTYCKIGENTDAINRHINITRSSAVSSMMAGDSILSVSNKVERTIHRFTEGEDALSFFKIYMQPKINCLYTPNNDVFCHFLSALKDNIVRATVFSCIDSLSCCDGKQVRVYLDEINPSTGKLLAVVRIAVNDRSDKGIDLGLDLLGMVKSTSLISTMTNTSKNLCLESVNYRIRTDNILVDTNDVECESAEEYKRRVDSGLPFVATKSKRTLFIDTDRERTDKIVVDFAIDLPAVNVVDKNNYSDLIKADGQMQPLLRYLL</sequence>
<organism>
    <name type="scientific">Ostreid herpesvirus 1 (isolate France)</name>
    <name type="common">OsHV-1</name>
    <name type="synonym">Pacific oyster herpesvirus</name>
    <dbReference type="NCBI Taxonomy" id="654903"/>
    <lineage>
        <taxon>Viruses</taxon>
        <taxon>Duplodnaviria</taxon>
        <taxon>Heunggongvirae</taxon>
        <taxon>Peploviricota</taxon>
        <taxon>Herviviricetes</taxon>
        <taxon>Herpesvirales</taxon>
        <taxon>Malacoherpesviridae</taxon>
        <taxon>Ostreavirus</taxon>
        <taxon>Ostreavirus ostreidmalaco1</taxon>
        <taxon>Ostreid herpesvirus 1</taxon>
    </lineage>
</organism>
<feature type="chain" id="PRO_0000385127" description="Uncharacterized protein ORF113">
    <location>
        <begin position="1"/>
        <end position="318"/>
    </location>
</feature>
<proteinExistence type="predicted"/>
<dbReference type="EMBL" id="AY509253">
    <property type="protein sequence ID" value="AAS00998.1"/>
    <property type="molecule type" value="Genomic_DNA"/>
</dbReference>
<dbReference type="RefSeq" id="YP_024651.1">
    <property type="nucleotide sequence ID" value="NC_005881.2"/>
</dbReference>
<dbReference type="KEGG" id="vg:2948172"/>
<dbReference type="Proteomes" id="UP000007021">
    <property type="component" value="Segment"/>
</dbReference>
<name>Y113_OSHVF</name>
<protein>
    <recommendedName>
        <fullName>Uncharacterized protein ORF113</fullName>
    </recommendedName>
</protein>
<gene>
    <name type="ORF">ORF113</name>
</gene>
<reference key="1">
    <citation type="journal article" date="2005" name="J. Gen. Virol.">
        <title>A novel class of herpesvirus with bivalve hosts.</title>
        <authorList>
            <person name="Davison A.J."/>
            <person name="Trus B.L."/>
            <person name="Cheng N."/>
            <person name="Steven A.C."/>
            <person name="Watson M.S."/>
            <person name="Cunningham C."/>
            <person name="Le Deuff R.M."/>
            <person name="Renault T."/>
        </authorList>
    </citation>
    <scope>NUCLEOTIDE SEQUENCE [LARGE SCALE GENOMIC DNA]</scope>
</reference>
<keyword id="KW-1185">Reference proteome</keyword>
<organismHost>
    <name type="scientific">Magallana gigas</name>
    <name type="common">Pacific oyster</name>
    <name type="synonym">Crassostrea gigas</name>
    <dbReference type="NCBI Taxonomy" id="29159"/>
</organismHost>
<organismHost>
    <name type="scientific">Pecten maximus</name>
    <name type="common">King scallop</name>
    <name type="synonym">Pilgrim's clam</name>
    <dbReference type="NCBI Taxonomy" id="6579"/>
</organismHost>